<feature type="chain" id="PRO_0000068341" description="Replication initiation protein">
    <location>
        <begin position="1"/>
        <end position="316"/>
    </location>
</feature>
<geneLocation type="plasmid">
    <name>pSC101</name>
</geneLocation>
<reference key="1">
    <citation type="journal article" date="1983" name="Proc. Natl. Acad. Sci. U.S.A.">
        <title>Primary structure of the essential replicon of the plasmid pSC101.</title>
        <authorList>
            <person name="Vocke C."/>
            <person name="Bastia D."/>
        </authorList>
    </citation>
    <scope>NUCLEOTIDE SEQUENCE [GENOMIC DNA]</scope>
</reference>
<gene>
    <name type="primary">repA</name>
</gene>
<protein>
    <recommendedName>
        <fullName>Replication initiation protein</fullName>
    </recommendedName>
</protein>
<proteinExistence type="inferred from homology"/>
<comment type="similarity">
    <text evidence="1">Belongs to the initiator RepB protein family.</text>
</comment>
<comment type="sequence caution" evidence="1">
    <conflict type="erroneous initiation">
        <sequence resource="EMBL-CDS" id="AAB59158"/>
    </conflict>
</comment>
<sequence>MSELVVFKANELAISRYDLTEHETKLILCCVALLNPTIENPTRKERTVSFTYNQYAQMMNISRENAYGVLAKATRELMTRTVEIRNPLVKGFEIFQWTNYAKFSSEKLELVFSEEILPYLFQLKKFIKYNLEHVKSFENKYSMRIYEWLLKELTQKKTHKANIEISLDEFKFMLMLENNYHEFKRLNQWVLKPISKDLNTYSNMKLVVDKRGRPTDTLIFQVELDRQMDLVTELENNQIKMNGDKIPTTITSDSYLHNGLRKTLHDALTAKIQLTSFEAKFLSDMQSKYDLNGSFSWLTQKQRTTLENILAKYGRI</sequence>
<keyword id="KW-0235">DNA replication</keyword>
<keyword id="KW-0614">Plasmid</keyword>
<dbReference type="EMBL" id="K00042">
    <property type="protein sequence ID" value="AAB59157.1"/>
    <property type="molecule type" value="Genomic_DNA"/>
</dbReference>
<dbReference type="EMBL" id="K00042">
    <property type="protein sequence ID" value="AAB59158.1"/>
    <property type="status" value="ALT_INIT"/>
    <property type="molecule type" value="Genomic_DNA"/>
</dbReference>
<dbReference type="PIR" id="A43703">
    <property type="entry name" value="A43703"/>
</dbReference>
<dbReference type="RefSeq" id="WP_001293213.1">
    <property type="nucleotide sequence ID" value="NZ_VDIZ01000045.1"/>
</dbReference>
<dbReference type="SMR" id="P22308"/>
<dbReference type="GO" id="GO:0003887">
    <property type="term" value="F:DNA-directed DNA polymerase activity"/>
    <property type="evidence" value="ECO:0007669"/>
    <property type="project" value="InterPro"/>
</dbReference>
<dbReference type="GO" id="GO:0006270">
    <property type="term" value="P:DNA replication initiation"/>
    <property type="evidence" value="ECO:0007669"/>
    <property type="project" value="InterPro"/>
</dbReference>
<dbReference type="Gene3D" id="1.10.10.10">
    <property type="entry name" value="Winged helix-like DNA-binding domain superfamily/Winged helix DNA-binding domain"/>
    <property type="match status" value="2"/>
</dbReference>
<dbReference type="InterPro" id="IPR000525">
    <property type="entry name" value="Initiator_Rep_WH1"/>
</dbReference>
<dbReference type="InterPro" id="IPR036388">
    <property type="entry name" value="WH-like_DNA-bd_sf"/>
</dbReference>
<dbReference type="InterPro" id="IPR036390">
    <property type="entry name" value="WH_DNA-bd_sf"/>
</dbReference>
<dbReference type="Pfam" id="PF21205">
    <property type="entry name" value="Rep3_C"/>
    <property type="match status" value="1"/>
</dbReference>
<dbReference type="Pfam" id="PF01051">
    <property type="entry name" value="Rep3_N"/>
    <property type="match status" value="1"/>
</dbReference>
<dbReference type="SUPFAM" id="SSF46785">
    <property type="entry name" value="Winged helix' DNA-binding domain"/>
    <property type="match status" value="2"/>
</dbReference>
<evidence type="ECO:0000305" key="1"/>
<accession>P22308</accession>
<name>REPY_ECOLX</name>
<organism>
    <name type="scientific">Escherichia coli</name>
    <dbReference type="NCBI Taxonomy" id="562"/>
    <lineage>
        <taxon>Bacteria</taxon>
        <taxon>Pseudomonadati</taxon>
        <taxon>Pseudomonadota</taxon>
        <taxon>Gammaproteobacteria</taxon>
        <taxon>Enterobacterales</taxon>
        <taxon>Enterobacteriaceae</taxon>
        <taxon>Escherichia</taxon>
    </lineage>
</organism>